<keyword id="KW-1003">Cell membrane</keyword>
<keyword id="KW-0472">Membrane</keyword>
<keyword id="KW-1185">Reference proteome</keyword>
<keyword id="KW-0812">Transmembrane</keyword>
<keyword id="KW-1133">Transmembrane helix</keyword>
<proteinExistence type="predicted"/>
<feature type="chain" id="PRO_0000216305" description="Uncharacterized protein PM0739">
    <location>
        <begin position="1"/>
        <end position="128"/>
    </location>
</feature>
<feature type="transmembrane region" description="Helical" evidence="1">
    <location>
        <begin position="19"/>
        <end position="41"/>
    </location>
</feature>
<feature type="transmembrane region" description="Helical" evidence="1">
    <location>
        <begin position="54"/>
        <end position="71"/>
    </location>
</feature>
<feature type="transmembrane region" description="Helical" evidence="1">
    <location>
        <begin position="75"/>
        <end position="97"/>
    </location>
</feature>
<name>Y739_PASMU</name>
<accession>Q9CMS3</accession>
<dbReference type="EMBL" id="AE004439">
    <property type="protein sequence ID" value="AAK02823.1"/>
    <property type="molecule type" value="Genomic_DNA"/>
</dbReference>
<dbReference type="STRING" id="272843.PM0739"/>
<dbReference type="EnsemblBacteria" id="AAK02823">
    <property type="protein sequence ID" value="AAK02823"/>
    <property type="gene ID" value="PM0739"/>
</dbReference>
<dbReference type="KEGG" id="pmu:PM0739"/>
<dbReference type="HOGENOM" id="CLU_2168550_0_0_6"/>
<dbReference type="Proteomes" id="UP000000809">
    <property type="component" value="Chromosome"/>
</dbReference>
<dbReference type="GO" id="GO:0005886">
    <property type="term" value="C:plasma membrane"/>
    <property type="evidence" value="ECO:0007669"/>
    <property type="project" value="UniProtKB-SubCell"/>
</dbReference>
<protein>
    <recommendedName>
        <fullName>Uncharacterized protein PM0739</fullName>
    </recommendedName>
</protein>
<evidence type="ECO:0000255" key="1"/>
<evidence type="ECO:0000305" key="2"/>
<sequence>MSLRQAILPACLNNTGDSMAIVTNTPIWVWCVLLCLLYVGSKQSKTRQIKPYKLTFLPLIFLPIVIMSIMQSHHPLIAGFGFIVGLALGLFFRVDNLEGCPFVTKTRATVDTKRKLSSAYPVLIHFYF</sequence>
<reference key="1">
    <citation type="journal article" date="2001" name="Proc. Natl. Acad. Sci. U.S.A.">
        <title>Complete genomic sequence of Pasteurella multocida Pm70.</title>
        <authorList>
            <person name="May B.J."/>
            <person name="Zhang Q."/>
            <person name="Li L.L."/>
            <person name="Paustian M.L."/>
            <person name="Whittam T.S."/>
            <person name="Kapur V."/>
        </authorList>
    </citation>
    <scope>NUCLEOTIDE SEQUENCE [LARGE SCALE GENOMIC DNA]</scope>
    <source>
        <strain>Pm70</strain>
    </source>
</reference>
<gene>
    <name type="ordered locus">PM0739</name>
</gene>
<organism>
    <name type="scientific">Pasteurella multocida (strain Pm70)</name>
    <dbReference type="NCBI Taxonomy" id="272843"/>
    <lineage>
        <taxon>Bacteria</taxon>
        <taxon>Pseudomonadati</taxon>
        <taxon>Pseudomonadota</taxon>
        <taxon>Gammaproteobacteria</taxon>
        <taxon>Pasteurellales</taxon>
        <taxon>Pasteurellaceae</taxon>
        <taxon>Pasteurella</taxon>
    </lineage>
</organism>
<comment type="subcellular location">
    <subcellularLocation>
        <location evidence="2">Cell membrane</location>
        <topology evidence="2">Multi-pass membrane protein</topology>
    </subcellularLocation>
</comment>